<feature type="signal peptide" evidence="1">
    <location>
        <begin position="1"/>
        <end position="21"/>
    </location>
</feature>
<feature type="chain" id="PRO_0000018220" description="Putative lipoprotein MlpA">
    <location>
        <begin position="22"/>
        <end position="236"/>
    </location>
</feature>
<feature type="lipid moiety-binding region" description="N-palmitoyl cysteine" evidence="1">
    <location>
        <position position="22"/>
    </location>
</feature>
<feature type="lipid moiety-binding region" description="S-diacylglycerol cysteine" evidence="1">
    <location>
        <position position="22"/>
    </location>
</feature>
<gene>
    <name type="primary">mlpA</name>
</gene>
<name>MLPA_MYXXA</name>
<protein>
    <recommendedName>
        <fullName>Putative lipoprotein MlpA</fullName>
    </recommendedName>
</protein>
<evidence type="ECO:0000255" key="1">
    <source>
        <dbReference type="PROSITE-ProRule" id="PRU00303"/>
    </source>
</evidence>
<evidence type="ECO:0000305" key="2"/>
<proteinExistence type="inferred from homology"/>
<organism>
    <name type="scientific">Myxococcus xanthus</name>
    <dbReference type="NCBI Taxonomy" id="34"/>
    <lineage>
        <taxon>Bacteria</taxon>
        <taxon>Pseudomonadati</taxon>
        <taxon>Myxococcota</taxon>
        <taxon>Myxococcia</taxon>
        <taxon>Myxococcales</taxon>
        <taxon>Cystobacterineae</taxon>
        <taxon>Myxococcaceae</taxon>
        <taxon>Myxococcus</taxon>
    </lineage>
</organism>
<accession>P38371</accession>
<reference key="1">
    <citation type="journal article" date="1993" name="J. Bacteriol.">
        <title>Oar, a 115-kilodalton membrane protein required for development of Myxococcus xanthus.</title>
        <authorList>
            <person name="Martinez-Canamero M."/>
            <person name="Munoz-Dorado J."/>
            <person name="Farez-Vidal E."/>
            <person name="Inouye M."/>
            <person name="Inouye S."/>
        </authorList>
    </citation>
    <scope>NUCLEOTIDE SEQUENCE [GENOMIC DNA]</scope>
    <source>
        <strain>DZF1</strain>
    </source>
</reference>
<dbReference type="EMBL" id="S64103">
    <property type="protein sequence ID" value="AAB27615.1"/>
    <property type="molecule type" value="Genomic_DNA"/>
</dbReference>
<dbReference type="PIR" id="B40609">
    <property type="entry name" value="B40609"/>
</dbReference>
<dbReference type="RefSeq" id="WP_011551567.1">
    <property type="nucleotide sequence ID" value="NZ_JABFNQ010000051.1"/>
</dbReference>
<dbReference type="OMA" id="YVMRAVW"/>
<dbReference type="GO" id="GO:0005886">
    <property type="term" value="C:plasma membrane"/>
    <property type="evidence" value="ECO:0007669"/>
    <property type="project" value="UniProtKB-SubCell"/>
</dbReference>
<dbReference type="PROSITE" id="PS51257">
    <property type="entry name" value="PROKAR_LIPOPROTEIN"/>
    <property type="match status" value="1"/>
</dbReference>
<sequence length="236" mass="24618">MTKNIVNTALVLVGAGSLLTGCNFEQPETNCFVQESPSWAVKYDVVDSPKDANGDECTTTAPLVELMGVYKYVNPETGAAQLALRPATLASRAIADTTTTSADQTSLGSLDTEPKDHGFCHANDFAPAFVNVAASDTAAANTIRYEFTNVRVYSAAVAPGTQFTGELKYTSNGCTSSYVMRAVWPPAPCDTASTEPAENCGVGSGLNPEFAVVCQPTSATGTTGYCVPAGDIPSFK</sequence>
<comment type="subcellular location">
    <subcellularLocation>
        <location evidence="2">Cell membrane</location>
        <topology evidence="2">Lipid-anchor</topology>
    </subcellularLocation>
</comment>
<keyword id="KW-1003">Cell membrane</keyword>
<keyword id="KW-0449">Lipoprotein</keyword>
<keyword id="KW-0472">Membrane</keyword>
<keyword id="KW-0564">Palmitate</keyword>
<keyword id="KW-0732">Signal</keyword>